<keyword id="KW-0175">Coiled coil</keyword>
<keyword id="KW-0436">Ligase</keyword>
<gene>
    <name evidence="1" type="primary">bshC</name>
    <name type="ordered locus">SACOL1190</name>
</gene>
<protein>
    <recommendedName>
        <fullName evidence="1">Putative cysteine ligase BshC</fullName>
        <ecNumber evidence="1">6.-.-.-</ecNumber>
    </recommendedName>
</protein>
<name>BSHC_STAAC</name>
<comment type="function">
    <text evidence="1">Involved in bacillithiol (BSH) biosynthesis. May catalyze the last step of the pathway, the addition of cysteine to glucosamine malate (GlcN-Mal) to generate BSH.</text>
</comment>
<comment type="similarity">
    <text evidence="1">Belongs to the BshC family.</text>
</comment>
<proteinExistence type="inferred from homology"/>
<dbReference type="EC" id="6.-.-.-" evidence="1"/>
<dbReference type="EMBL" id="CP000046">
    <property type="protein sequence ID" value="AAW36569.1"/>
    <property type="molecule type" value="Genomic_DNA"/>
</dbReference>
<dbReference type="RefSeq" id="WP_000340474.1">
    <property type="nucleotide sequence ID" value="NC_002951.2"/>
</dbReference>
<dbReference type="SMR" id="Q5HGQ4"/>
<dbReference type="KEGG" id="sac:SACOL1190"/>
<dbReference type="HOGENOM" id="CLU_022249_0_0_9"/>
<dbReference type="Proteomes" id="UP000000530">
    <property type="component" value="Chromosome"/>
</dbReference>
<dbReference type="GO" id="GO:0016874">
    <property type="term" value="F:ligase activity"/>
    <property type="evidence" value="ECO:0007669"/>
    <property type="project" value="UniProtKB-UniRule"/>
</dbReference>
<dbReference type="HAMAP" id="MF_01867">
    <property type="entry name" value="BshC"/>
    <property type="match status" value="1"/>
</dbReference>
<dbReference type="InterPro" id="IPR011199">
    <property type="entry name" value="Bacillithiol_biosynth_BshC"/>
</dbReference>
<dbReference type="InterPro" id="IPR055399">
    <property type="entry name" value="CC_BshC"/>
</dbReference>
<dbReference type="InterPro" id="IPR055398">
    <property type="entry name" value="Rossmann-like_BshC"/>
</dbReference>
<dbReference type="NCBIfam" id="TIGR03998">
    <property type="entry name" value="thiol_BshC"/>
    <property type="match status" value="1"/>
</dbReference>
<dbReference type="Pfam" id="PF24850">
    <property type="entry name" value="CC_BshC"/>
    <property type="match status" value="1"/>
</dbReference>
<dbReference type="Pfam" id="PF10079">
    <property type="entry name" value="Rossmann-like_BshC"/>
    <property type="match status" value="1"/>
</dbReference>
<dbReference type="PIRSF" id="PIRSF012535">
    <property type="entry name" value="UCP012535"/>
    <property type="match status" value="1"/>
</dbReference>
<accession>Q5HGQ4</accession>
<feature type="chain" id="PRO_0000378253" description="Putative cysteine ligase BshC">
    <location>
        <begin position="1"/>
        <end position="537"/>
    </location>
</feature>
<feature type="coiled-coil region" evidence="1">
    <location>
        <begin position="422"/>
        <end position="450"/>
    </location>
</feature>
<organism>
    <name type="scientific">Staphylococcus aureus (strain COL)</name>
    <dbReference type="NCBI Taxonomy" id="93062"/>
    <lineage>
        <taxon>Bacteria</taxon>
        <taxon>Bacillati</taxon>
        <taxon>Bacillota</taxon>
        <taxon>Bacilli</taxon>
        <taxon>Bacillales</taxon>
        <taxon>Staphylococcaceae</taxon>
        <taxon>Staphylococcus</taxon>
    </lineage>
</organism>
<sequence length="537" mass="62823">MDCKVVSLNEKDQFIPKIKSSDPVITGLFQYDAAQQTSFEKRMSKENNGREAALANVIREYMSDLKLSSEQELNIQHLANGSKVVIGGQQAGLFGGPLYTFHKIFSIITLSKELTDTHKQQVVPVFWIAGEDHDFDEVNHTFVYNENHGSLHKVKYHTMEMPETTVSRYYPDKAELKQTLKTMFIHMKETVHTQGLLEICDRIIDQYDSWTDMFKALLHETFKAYGVLFIDAQFEPLRKMEAPMFKKILKKHQLLDDAFRATQQRTQNQGLNAMIQTDTNVHLFLHDENMRQLVSYDGKHFKLNKTDKTYIKEEIINIAENQPELFSNNVVTRPLMEEWLFNTVAFVGGPSEIKYWAELKDVFELFDVEMPIVMPRLRITYLNDRIEKLLSKYNIPLEKVLVDGVEGERSKFIREQASHQFIEKVEGMIEQQRRLNKDLLDEVAGNQNNINLVNKNNEIHIQQYDYLLKRYLLNIERENDISMKQFREIQETLHPMGGLQERIWNLLQILNDFGTDVFKPSTYPPLSYTFDHIIIKP</sequence>
<evidence type="ECO:0000255" key="1">
    <source>
        <dbReference type="HAMAP-Rule" id="MF_01867"/>
    </source>
</evidence>
<reference key="1">
    <citation type="journal article" date="2005" name="J. Bacteriol.">
        <title>Insights on evolution of virulence and resistance from the complete genome analysis of an early methicillin-resistant Staphylococcus aureus strain and a biofilm-producing methicillin-resistant Staphylococcus epidermidis strain.</title>
        <authorList>
            <person name="Gill S.R."/>
            <person name="Fouts D.E."/>
            <person name="Archer G.L."/>
            <person name="Mongodin E.F."/>
            <person name="DeBoy R.T."/>
            <person name="Ravel J."/>
            <person name="Paulsen I.T."/>
            <person name="Kolonay J.F."/>
            <person name="Brinkac L.M."/>
            <person name="Beanan M.J."/>
            <person name="Dodson R.J."/>
            <person name="Daugherty S.C."/>
            <person name="Madupu R."/>
            <person name="Angiuoli S.V."/>
            <person name="Durkin A.S."/>
            <person name="Haft D.H."/>
            <person name="Vamathevan J.J."/>
            <person name="Khouri H."/>
            <person name="Utterback T.R."/>
            <person name="Lee C."/>
            <person name="Dimitrov G."/>
            <person name="Jiang L."/>
            <person name="Qin H."/>
            <person name="Weidman J."/>
            <person name="Tran K."/>
            <person name="Kang K.H."/>
            <person name="Hance I.R."/>
            <person name="Nelson K.E."/>
            <person name="Fraser C.M."/>
        </authorList>
    </citation>
    <scope>NUCLEOTIDE SEQUENCE [LARGE SCALE GENOMIC DNA]</scope>
    <source>
        <strain>COL</strain>
    </source>
</reference>